<reference key="1">
    <citation type="journal article" date="2005" name="J. Bacteriol.">
        <title>Insights into genome plasticity and pathogenicity of the plant pathogenic Bacterium Xanthomonas campestris pv. vesicatoria revealed by the complete genome sequence.</title>
        <authorList>
            <person name="Thieme F."/>
            <person name="Koebnik R."/>
            <person name="Bekel T."/>
            <person name="Berger C."/>
            <person name="Boch J."/>
            <person name="Buettner D."/>
            <person name="Caldana C."/>
            <person name="Gaigalat L."/>
            <person name="Goesmann A."/>
            <person name="Kay S."/>
            <person name="Kirchner O."/>
            <person name="Lanz C."/>
            <person name="Linke B."/>
            <person name="McHardy A.C."/>
            <person name="Meyer F."/>
            <person name="Mittenhuber G."/>
            <person name="Nies D.H."/>
            <person name="Niesbach-Kloesgen U."/>
            <person name="Patschkowski T."/>
            <person name="Rueckert C."/>
            <person name="Rupp O."/>
            <person name="Schneiker S."/>
            <person name="Schuster S.C."/>
            <person name="Vorhoelter F.J."/>
            <person name="Weber E."/>
            <person name="Puehler A."/>
            <person name="Bonas U."/>
            <person name="Bartels D."/>
            <person name="Kaiser O."/>
        </authorList>
    </citation>
    <scope>NUCLEOTIDE SEQUENCE [LARGE SCALE GENOMIC DNA]</scope>
    <source>
        <strain>85-10</strain>
    </source>
</reference>
<organism>
    <name type="scientific">Xanthomonas euvesicatoria pv. vesicatoria (strain 85-10)</name>
    <name type="common">Xanthomonas campestris pv. vesicatoria</name>
    <dbReference type="NCBI Taxonomy" id="316273"/>
    <lineage>
        <taxon>Bacteria</taxon>
        <taxon>Pseudomonadati</taxon>
        <taxon>Pseudomonadota</taxon>
        <taxon>Gammaproteobacteria</taxon>
        <taxon>Lysobacterales</taxon>
        <taxon>Lysobacteraceae</taxon>
        <taxon>Xanthomonas</taxon>
    </lineage>
</organism>
<feature type="chain" id="PRO_0000225314" description="DNA-directed RNA polymerase subunit alpha">
    <location>
        <begin position="1"/>
        <end position="332"/>
    </location>
</feature>
<feature type="region of interest" description="Alpha N-terminal domain (alpha-NTD)" evidence="1">
    <location>
        <begin position="1"/>
        <end position="234"/>
    </location>
</feature>
<feature type="region of interest" description="Alpha C-terminal domain (alpha-CTD)" evidence="1">
    <location>
        <begin position="248"/>
        <end position="332"/>
    </location>
</feature>
<keyword id="KW-0240">DNA-directed RNA polymerase</keyword>
<keyword id="KW-0548">Nucleotidyltransferase</keyword>
<keyword id="KW-0804">Transcription</keyword>
<keyword id="KW-0808">Transferase</keyword>
<evidence type="ECO:0000255" key="1">
    <source>
        <dbReference type="HAMAP-Rule" id="MF_00059"/>
    </source>
</evidence>
<name>RPOA_XANE5</name>
<comment type="function">
    <text evidence="1">DNA-dependent RNA polymerase catalyzes the transcription of DNA into RNA using the four ribonucleoside triphosphates as substrates.</text>
</comment>
<comment type="catalytic activity">
    <reaction evidence="1">
        <text>RNA(n) + a ribonucleoside 5'-triphosphate = RNA(n+1) + diphosphate</text>
        <dbReference type="Rhea" id="RHEA:21248"/>
        <dbReference type="Rhea" id="RHEA-COMP:14527"/>
        <dbReference type="Rhea" id="RHEA-COMP:17342"/>
        <dbReference type="ChEBI" id="CHEBI:33019"/>
        <dbReference type="ChEBI" id="CHEBI:61557"/>
        <dbReference type="ChEBI" id="CHEBI:140395"/>
        <dbReference type="EC" id="2.7.7.6"/>
    </reaction>
</comment>
<comment type="subunit">
    <text evidence="1">Homodimer. The RNAP catalytic core consists of 2 alpha, 1 beta, 1 beta' and 1 omega subunit. When a sigma factor is associated with the core the holoenzyme is formed, which can initiate transcription.</text>
</comment>
<comment type="domain">
    <text evidence="1">The N-terminal domain is essential for RNAP assembly and basal transcription, whereas the C-terminal domain is involved in interaction with transcriptional regulators and with upstream promoter elements.</text>
</comment>
<comment type="similarity">
    <text evidence="1">Belongs to the RNA polymerase alpha chain family.</text>
</comment>
<dbReference type="EC" id="2.7.7.6" evidence="1"/>
<dbReference type="EMBL" id="AM039952">
    <property type="protein sequence ID" value="CAJ22654.1"/>
    <property type="molecule type" value="Genomic_DNA"/>
</dbReference>
<dbReference type="RefSeq" id="WP_002811635.1">
    <property type="nucleotide sequence ID" value="NZ_CP017190.1"/>
</dbReference>
<dbReference type="SMR" id="Q3BWV9"/>
<dbReference type="STRING" id="456327.BJD11_17620"/>
<dbReference type="KEGG" id="xcv:XCV1023"/>
<dbReference type="eggNOG" id="COG0202">
    <property type="taxonomic scope" value="Bacteria"/>
</dbReference>
<dbReference type="HOGENOM" id="CLU_053084_0_1_6"/>
<dbReference type="Proteomes" id="UP000007069">
    <property type="component" value="Chromosome"/>
</dbReference>
<dbReference type="GO" id="GO:0005737">
    <property type="term" value="C:cytoplasm"/>
    <property type="evidence" value="ECO:0007669"/>
    <property type="project" value="UniProtKB-ARBA"/>
</dbReference>
<dbReference type="GO" id="GO:0000428">
    <property type="term" value="C:DNA-directed RNA polymerase complex"/>
    <property type="evidence" value="ECO:0007669"/>
    <property type="project" value="UniProtKB-KW"/>
</dbReference>
<dbReference type="GO" id="GO:0003677">
    <property type="term" value="F:DNA binding"/>
    <property type="evidence" value="ECO:0007669"/>
    <property type="project" value="UniProtKB-UniRule"/>
</dbReference>
<dbReference type="GO" id="GO:0003899">
    <property type="term" value="F:DNA-directed RNA polymerase activity"/>
    <property type="evidence" value="ECO:0007669"/>
    <property type="project" value="UniProtKB-UniRule"/>
</dbReference>
<dbReference type="GO" id="GO:0046983">
    <property type="term" value="F:protein dimerization activity"/>
    <property type="evidence" value="ECO:0007669"/>
    <property type="project" value="InterPro"/>
</dbReference>
<dbReference type="GO" id="GO:0006351">
    <property type="term" value="P:DNA-templated transcription"/>
    <property type="evidence" value="ECO:0007669"/>
    <property type="project" value="UniProtKB-UniRule"/>
</dbReference>
<dbReference type="CDD" id="cd06928">
    <property type="entry name" value="RNAP_alpha_NTD"/>
    <property type="match status" value="1"/>
</dbReference>
<dbReference type="FunFam" id="1.10.150.20:FF:000001">
    <property type="entry name" value="DNA-directed RNA polymerase subunit alpha"/>
    <property type="match status" value="1"/>
</dbReference>
<dbReference type="FunFam" id="2.170.120.12:FF:000001">
    <property type="entry name" value="DNA-directed RNA polymerase subunit alpha"/>
    <property type="match status" value="1"/>
</dbReference>
<dbReference type="Gene3D" id="1.10.150.20">
    <property type="entry name" value="5' to 3' exonuclease, C-terminal subdomain"/>
    <property type="match status" value="1"/>
</dbReference>
<dbReference type="Gene3D" id="2.170.120.12">
    <property type="entry name" value="DNA-directed RNA polymerase, insert domain"/>
    <property type="match status" value="1"/>
</dbReference>
<dbReference type="Gene3D" id="3.30.1360.10">
    <property type="entry name" value="RNA polymerase, RBP11-like subunit"/>
    <property type="match status" value="1"/>
</dbReference>
<dbReference type="HAMAP" id="MF_00059">
    <property type="entry name" value="RNApol_bact_RpoA"/>
    <property type="match status" value="1"/>
</dbReference>
<dbReference type="InterPro" id="IPR011262">
    <property type="entry name" value="DNA-dir_RNA_pol_insert"/>
</dbReference>
<dbReference type="InterPro" id="IPR011263">
    <property type="entry name" value="DNA-dir_RNA_pol_RpoA/D/Rpb3"/>
</dbReference>
<dbReference type="InterPro" id="IPR011773">
    <property type="entry name" value="DNA-dir_RpoA"/>
</dbReference>
<dbReference type="InterPro" id="IPR036603">
    <property type="entry name" value="RBP11-like"/>
</dbReference>
<dbReference type="InterPro" id="IPR011260">
    <property type="entry name" value="RNAP_asu_C"/>
</dbReference>
<dbReference type="InterPro" id="IPR036643">
    <property type="entry name" value="RNApol_insert_sf"/>
</dbReference>
<dbReference type="NCBIfam" id="NF003513">
    <property type="entry name" value="PRK05182.1-2"/>
    <property type="match status" value="1"/>
</dbReference>
<dbReference type="NCBIfam" id="NF003519">
    <property type="entry name" value="PRK05182.2-5"/>
    <property type="match status" value="1"/>
</dbReference>
<dbReference type="NCBIfam" id="TIGR02027">
    <property type="entry name" value="rpoA"/>
    <property type="match status" value="1"/>
</dbReference>
<dbReference type="Pfam" id="PF01000">
    <property type="entry name" value="RNA_pol_A_bac"/>
    <property type="match status" value="1"/>
</dbReference>
<dbReference type="Pfam" id="PF03118">
    <property type="entry name" value="RNA_pol_A_CTD"/>
    <property type="match status" value="1"/>
</dbReference>
<dbReference type="Pfam" id="PF01193">
    <property type="entry name" value="RNA_pol_L"/>
    <property type="match status" value="1"/>
</dbReference>
<dbReference type="SMART" id="SM00662">
    <property type="entry name" value="RPOLD"/>
    <property type="match status" value="1"/>
</dbReference>
<dbReference type="SUPFAM" id="SSF47789">
    <property type="entry name" value="C-terminal domain of RNA polymerase alpha subunit"/>
    <property type="match status" value="1"/>
</dbReference>
<dbReference type="SUPFAM" id="SSF56553">
    <property type="entry name" value="Insert subdomain of RNA polymerase alpha subunit"/>
    <property type="match status" value="1"/>
</dbReference>
<dbReference type="SUPFAM" id="SSF55257">
    <property type="entry name" value="RBP11-like subunits of RNA polymerase"/>
    <property type="match status" value="1"/>
</dbReference>
<proteinExistence type="inferred from homology"/>
<accession>Q3BWV9</accession>
<protein>
    <recommendedName>
        <fullName evidence="1">DNA-directed RNA polymerase subunit alpha</fullName>
        <shortName evidence="1">RNAP subunit alpha</shortName>
        <ecNumber evidence="1">2.7.7.6</ecNumber>
    </recommendedName>
    <alternativeName>
        <fullName evidence="1">RNA polymerase subunit alpha</fullName>
    </alternativeName>
    <alternativeName>
        <fullName evidence="1">Transcriptase subunit alpha</fullName>
    </alternativeName>
</protein>
<sequence length="332" mass="36364">MTVTANQVLRPRGPQIERLTDNRAKVVIEPLERGYGHTLGNALRRVLLSSIPGFAITEVEIDGVLHEYTTVEGLQEDVLDVLLNLKDVAIRMHSGDSATLSLSKQGPGTVTAADIRTDHNVEIINGDHVICHLTKDTALNMRLKIERGFGYQPAAARRRPDEETRTIGRLMLDASFSPVRRVAYAVEAARVEQRTDLDKLVIDIETNGTIDAEEAVRTAADILSDQLSVFGDFTHRDRGAAKPAASGVDPVLLRPIDDLELTVRSANCLKAESIYYIGDLIQKTEVELLKTPNLGKKSLTEIKEVLAQRGLALGMKLENWPPAGVAQHGMLG</sequence>
<gene>
    <name evidence="1" type="primary">rpoA</name>
    <name type="ordered locus">XCV1023</name>
</gene>